<keyword id="KW-0067">ATP-binding</keyword>
<keyword id="KW-0963">Cytoplasm</keyword>
<keyword id="KW-0227">DNA damage</keyword>
<keyword id="KW-0234">DNA repair</keyword>
<keyword id="KW-0235">DNA replication</keyword>
<keyword id="KW-0238">DNA-binding</keyword>
<keyword id="KW-0547">Nucleotide-binding</keyword>
<keyword id="KW-1185">Reference proteome</keyword>
<keyword id="KW-0742">SOS response</keyword>
<comment type="function">
    <text evidence="1">The RecF protein is involved in DNA metabolism; it is required for DNA replication and normal SOS inducibility. RecF binds preferentially to single-stranded, linear DNA. It also seems to bind ATP.</text>
</comment>
<comment type="subcellular location">
    <subcellularLocation>
        <location evidence="1">Cytoplasm</location>
    </subcellularLocation>
</comment>
<comment type="similarity">
    <text evidence="1">Belongs to the RecF family.</text>
</comment>
<evidence type="ECO:0000255" key="1">
    <source>
        <dbReference type="HAMAP-Rule" id="MF_00365"/>
    </source>
</evidence>
<reference key="1">
    <citation type="journal article" date="2001" name="Science">
        <title>Complete genome sequence of a virulent isolate of Streptococcus pneumoniae.</title>
        <authorList>
            <person name="Tettelin H."/>
            <person name="Nelson K.E."/>
            <person name="Paulsen I.T."/>
            <person name="Eisen J.A."/>
            <person name="Read T.D."/>
            <person name="Peterson S.N."/>
            <person name="Heidelberg J.F."/>
            <person name="DeBoy R.T."/>
            <person name="Haft D.H."/>
            <person name="Dodson R.J."/>
            <person name="Durkin A.S."/>
            <person name="Gwinn M.L."/>
            <person name="Kolonay J.F."/>
            <person name="Nelson W.C."/>
            <person name="Peterson J.D."/>
            <person name="Umayam L.A."/>
            <person name="White O."/>
            <person name="Salzberg S.L."/>
            <person name="Lewis M.R."/>
            <person name="Radune D."/>
            <person name="Holtzapple E.K."/>
            <person name="Khouri H.M."/>
            <person name="Wolf A.M."/>
            <person name="Utterback T.R."/>
            <person name="Hansen C.L."/>
            <person name="McDonald L.A."/>
            <person name="Feldblyum T.V."/>
            <person name="Angiuoli S.V."/>
            <person name="Dickinson T."/>
            <person name="Hickey E.K."/>
            <person name="Holt I.E."/>
            <person name="Loftus B.J."/>
            <person name="Yang F."/>
            <person name="Smith H.O."/>
            <person name="Venter J.C."/>
            <person name="Dougherty B.A."/>
            <person name="Morrison D.A."/>
            <person name="Hollingshead S.K."/>
            <person name="Fraser C.M."/>
        </authorList>
    </citation>
    <scope>NUCLEOTIDE SEQUENCE [LARGE SCALE GENOMIC DNA]</scope>
    <source>
        <strain>ATCC BAA-334 / TIGR4</strain>
    </source>
</reference>
<feature type="chain" id="PRO_0000196472" description="DNA replication and repair protein RecF">
    <location>
        <begin position="1"/>
        <end position="365"/>
    </location>
</feature>
<feature type="binding site" evidence="1">
    <location>
        <begin position="30"/>
        <end position="37"/>
    </location>
    <ligand>
        <name>ATP</name>
        <dbReference type="ChEBI" id="CHEBI:30616"/>
    </ligand>
</feature>
<name>RECF_STRPN</name>
<protein>
    <recommendedName>
        <fullName evidence="1">DNA replication and repair protein RecF</fullName>
    </recommendedName>
</protein>
<accession>Q97N44</accession>
<proteinExistence type="inferred from homology"/>
<dbReference type="EMBL" id="AE005672">
    <property type="protein sequence ID" value="AAK76275.1"/>
    <property type="molecule type" value="Genomic_DNA"/>
</dbReference>
<dbReference type="PIR" id="B95260">
    <property type="entry name" value="B95260"/>
</dbReference>
<dbReference type="RefSeq" id="WP_000266660.1">
    <property type="nucleotide sequence ID" value="NZ_CP155539.1"/>
</dbReference>
<dbReference type="SMR" id="Q97N44"/>
<dbReference type="PaxDb" id="170187-SP_2227"/>
<dbReference type="EnsemblBacteria" id="AAK76275">
    <property type="protein sequence ID" value="AAK76275"/>
    <property type="gene ID" value="SP_2227"/>
</dbReference>
<dbReference type="KEGG" id="spn:SP_2227"/>
<dbReference type="eggNOG" id="COG1195">
    <property type="taxonomic scope" value="Bacteria"/>
</dbReference>
<dbReference type="PhylomeDB" id="Q97N44"/>
<dbReference type="BioCyc" id="SPNE170187:G1FZB-2327-MONOMER"/>
<dbReference type="Proteomes" id="UP000000585">
    <property type="component" value="Chromosome"/>
</dbReference>
<dbReference type="GO" id="GO:0005737">
    <property type="term" value="C:cytoplasm"/>
    <property type="evidence" value="ECO:0007669"/>
    <property type="project" value="UniProtKB-SubCell"/>
</dbReference>
<dbReference type="GO" id="GO:0005524">
    <property type="term" value="F:ATP binding"/>
    <property type="evidence" value="ECO:0007669"/>
    <property type="project" value="UniProtKB-UniRule"/>
</dbReference>
<dbReference type="GO" id="GO:0003697">
    <property type="term" value="F:single-stranded DNA binding"/>
    <property type="evidence" value="ECO:0007669"/>
    <property type="project" value="UniProtKB-UniRule"/>
</dbReference>
<dbReference type="GO" id="GO:0006260">
    <property type="term" value="P:DNA replication"/>
    <property type="evidence" value="ECO:0007669"/>
    <property type="project" value="UniProtKB-UniRule"/>
</dbReference>
<dbReference type="GO" id="GO:0000731">
    <property type="term" value="P:DNA synthesis involved in DNA repair"/>
    <property type="evidence" value="ECO:0007669"/>
    <property type="project" value="TreeGrafter"/>
</dbReference>
<dbReference type="GO" id="GO:0006302">
    <property type="term" value="P:double-strand break repair"/>
    <property type="evidence" value="ECO:0007669"/>
    <property type="project" value="TreeGrafter"/>
</dbReference>
<dbReference type="GO" id="GO:0009432">
    <property type="term" value="P:SOS response"/>
    <property type="evidence" value="ECO:0007669"/>
    <property type="project" value="UniProtKB-UniRule"/>
</dbReference>
<dbReference type="CDD" id="cd03242">
    <property type="entry name" value="ABC_RecF"/>
    <property type="match status" value="1"/>
</dbReference>
<dbReference type="FunFam" id="1.20.1050.90:FF:000002">
    <property type="entry name" value="DNA replication and repair protein RecF"/>
    <property type="match status" value="1"/>
</dbReference>
<dbReference type="Gene3D" id="3.40.50.300">
    <property type="entry name" value="P-loop containing nucleotide triphosphate hydrolases"/>
    <property type="match status" value="1"/>
</dbReference>
<dbReference type="Gene3D" id="1.20.1050.90">
    <property type="entry name" value="RecF/RecN/SMC, N-terminal domain"/>
    <property type="match status" value="1"/>
</dbReference>
<dbReference type="HAMAP" id="MF_00365">
    <property type="entry name" value="RecF"/>
    <property type="match status" value="1"/>
</dbReference>
<dbReference type="InterPro" id="IPR001238">
    <property type="entry name" value="DNA-binding_RecF"/>
</dbReference>
<dbReference type="InterPro" id="IPR018078">
    <property type="entry name" value="DNA-binding_RecF_CS"/>
</dbReference>
<dbReference type="InterPro" id="IPR027417">
    <property type="entry name" value="P-loop_NTPase"/>
</dbReference>
<dbReference type="InterPro" id="IPR003395">
    <property type="entry name" value="RecF/RecN/SMC_N"/>
</dbReference>
<dbReference type="InterPro" id="IPR042174">
    <property type="entry name" value="RecF_2"/>
</dbReference>
<dbReference type="NCBIfam" id="TIGR00611">
    <property type="entry name" value="recf"/>
    <property type="match status" value="1"/>
</dbReference>
<dbReference type="PANTHER" id="PTHR32182">
    <property type="entry name" value="DNA REPLICATION AND REPAIR PROTEIN RECF"/>
    <property type="match status" value="1"/>
</dbReference>
<dbReference type="PANTHER" id="PTHR32182:SF0">
    <property type="entry name" value="DNA REPLICATION AND REPAIR PROTEIN RECF"/>
    <property type="match status" value="1"/>
</dbReference>
<dbReference type="Pfam" id="PF02463">
    <property type="entry name" value="SMC_N"/>
    <property type="match status" value="1"/>
</dbReference>
<dbReference type="SUPFAM" id="SSF52540">
    <property type="entry name" value="P-loop containing nucleoside triphosphate hydrolases"/>
    <property type="match status" value="1"/>
</dbReference>
<dbReference type="PROSITE" id="PS00617">
    <property type="entry name" value="RECF_1"/>
    <property type="match status" value="1"/>
</dbReference>
<dbReference type="PROSITE" id="PS00618">
    <property type="entry name" value="RECF_2"/>
    <property type="match status" value="1"/>
</dbReference>
<sequence length="365" mass="41900">MWLQHLSLKTFRNYKETKIDFNPKLNVFLGRNAQGKTNMLEAIYFLALTRSHRTRTDKNLIHFDEEQLHLSGLVQKKTGSIPLEIELTQKGRVTKVNHLKQARLSDYVGHMNVVLFAPEDLQLIKGAPSIRRKFIDMELGQIKPIYLSDLTNYNHILKQRNTYLKSAQKIDETFLSVLDDQLVDYGCRVMNHRLDFIKKLESFGRKKHFELSNQIEELSISYQSSVNITDKQNLSESFKIALEKSRSRDLFKKNTGVGPHRDDISFYINGMDASFGSQGQHRSLVLSIKLAEIELMESITTESPILLLDDVMSELDNTRQLKLLETISQSIQTFITTTSLDHLQNLPENLSIFTIQDGKAAVNGN</sequence>
<organism>
    <name type="scientific">Streptococcus pneumoniae serotype 4 (strain ATCC BAA-334 / TIGR4)</name>
    <dbReference type="NCBI Taxonomy" id="170187"/>
    <lineage>
        <taxon>Bacteria</taxon>
        <taxon>Bacillati</taxon>
        <taxon>Bacillota</taxon>
        <taxon>Bacilli</taxon>
        <taxon>Lactobacillales</taxon>
        <taxon>Streptococcaceae</taxon>
        <taxon>Streptococcus</taxon>
    </lineage>
</organism>
<gene>
    <name evidence="1" type="primary">recF</name>
    <name type="ordered locus">SP_2227</name>
</gene>